<evidence type="ECO:0000255" key="1">
    <source>
        <dbReference type="HAMAP-Rule" id="MF_01307"/>
    </source>
</evidence>
<evidence type="ECO:0000305" key="2"/>
<gene>
    <name evidence="1" type="primary">rpsE</name>
    <name type="ordered locus">FTN_0256</name>
</gene>
<protein>
    <recommendedName>
        <fullName evidence="1">Small ribosomal subunit protein uS5</fullName>
    </recommendedName>
    <alternativeName>
        <fullName evidence="2">30S ribosomal protein S5</fullName>
    </alternativeName>
</protein>
<accession>A0Q4K0</accession>
<comment type="function">
    <text evidence="1">With S4 and S12 plays an important role in translational accuracy.</text>
</comment>
<comment type="function">
    <text evidence="1">Located at the back of the 30S subunit body where it stabilizes the conformation of the head with respect to the body.</text>
</comment>
<comment type="subunit">
    <text evidence="1">Part of the 30S ribosomal subunit. Contacts proteins S4 and S8.</text>
</comment>
<comment type="domain">
    <text>The N-terminal domain interacts with the head of the 30S subunit; the C-terminal domain interacts with the body and contacts protein S4. The interaction surface between S4 and S5 is involved in control of translational fidelity.</text>
</comment>
<comment type="similarity">
    <text evidence="1">Belongs to the universal ribosomal protein uS5 family.</text>
</comment>
<organism>
    <name type="scientific">Francisella tularensis subsp. novicida (strain U112)</name>
    <dbReference type="NCBI Taxonomy" id="401614"/>
    <lineage>
        <taxon>Bacteria</taxon>
        <taxon>Pseudomonadati</taxon>
        <taxon>Pseudomonadota</taxon>
        <taxon>Gammaproteobacteria</taxon>
        <taxon>Thiotrichales</taxon>
        <taxon>Francisellaceae</taxon>
        <taxon>Francisella</taxon>
    </lineage>
</organism>
<dbReference type="EMBL" id="CP000439">
    <property type="protein sequence ID" value="ABK89165.1"/>
    <property type="molecule type" value="Genomic_DNA"/>
</dbReference>
<dbReference type="RefSeq" id="WP_003021588.1">
    <property type="nucleotide sequence ID" value="NZ_CP009633.1"/>
</dbReference>
<dbReference type="SMR" id="A0Q4K0"/>
<dbReference type="GeneID" id="75264244"/>
<dbReference type="KEGG" id="ftn:FTN_0256"/>
<dbReference type="KEGG" id="ftx:AW25_1786"/>
<dbReference type="BioCyc" id="FTUL401614:G1G75-267-MONOMER"/>
<dbReference type="Proteomes" id="UP000000762">
    <property type="component" value="Chromosome"/>
</dbReference>
<dbReference type="GO" id="GO:0015935">
    <property type="term" value="C:small ribosomal subunit"/>
    <property type="evidence" value="ECO:0007669"/>
    <property type="project" value="InterPro"/>
</dbReference>
<dbReference type="GO" id="GO:0019843">
    <property type="term" value="F:rRNA binding"/>
    <property type="evidence" value="ECO:0007669"/>
    <property type="project" value="UniProtKB-UniRule"/>
</dbReference>
<dbReference type="GO" id="GO:0003735">
    <property type="term" value="F:structural constituent of ribosome"/>
    <property type="evidence" value="ECO:0007669"/>
    <property type="project" value="InterPro"/>
</dbReference>
<dbReference type="GO" id="GO:0006412">
    <property type="term" value="P:translation"/>
    <property type="evidence" value="ECO:0007669"/>
    <property type="project" value="UniProtKB-UniRule"/>
</dbReference>
<dbReference type="FunFam" id="3.30.160.20:FF:000001">
    <property type="entry name" value="30S ribosomal protein S5"/>
    <property type="match status" value="1"/>
</dbReference>
<dbReference type="FunFam" id="3.30.230.10:FF:000002">
    <property type="entry name" value="30S ribosomal protein S5"/>
    <property type="match status" value="1"/>
</dbReference>
<dbReference type="Gene3D" id="3.30.160.20">
    <property type="match status" value="1"/>
</dbReference>
<dbReference type="Gene3D" id="3.30.230.10">
    <property type="match status" value="1"/>
</dbReference>
<dbReference type="HAMAP" id="MF_01307_B">
    <property type="entry name" value="Ribosomal_uS5_B"/>
    <property type="match status" value="1"/>
</dbReference>
<dbReference type="InterPro" id="IPR020568">
    <property type="entry name" value="Ribosomal_Su5_D2-typ_SF"/>
</dbReference>
<dbReference type="InterPro" id="IPR000851">
    <property type="entry name" value="Ribosomal_uS5"/>
</dbReference>
<dbReference type="InterPro" id="IPR005712">
    <property type="entry name" value="Ribosomal_uS5_bac-type"/>
</dbReference>
<dbReference type="InterPro" id="IPR005324">
    <property type="entry name" value="Ribosomal_uS5_C"/>
</dbReference>
<dbReference type="InterPro" id="IPR013810">
    <property type="entry name" value="Ribosomal_uS5_N"/>
</dbReference>
<dbReference type="InterPro" id="IPR018192">
    <property type="entry name" value="Ribosomal_uS5_N_CS"/>
</dbReference>
<dbReference type="InterPro" id="IPR014721">
    <property type="entry name" value="Ribsml_uS5_D2-typ_fold_subgr"/>
</dbReference>
<dbReference type="NCBIfam" id="TIGR01021">
    <property type="entry name" value="rpsE_bact"/>
    <property type="match status" value="1"/>
</dbReference>
<dbReference type="PANTHER" id="PTHR48277">
    <property type="entry name" value="MITOCHONDRIAL RIBOSOMAL PROTEIN S5"/>
    <property type="match status" value="1"/>
</dbReference>
<dbReference type="PANTHER" id="PTHR48277:SF1">
    <property type="entry name" value="MITOCHONDRIAL RIBOSOMAL PROTEIN S5"/>
    <property type="match status" value="1"/>
</dbReference>
<dbReference type="Pfam" id="PF00333">
    <property type="entry name" value="Ribosomal_S5"/>
    <property type="match status" value="1"/>
</dbReference>
<dbReference type="Pfam" id="PF03719">
    <property type="entry name" value="Ribosomal_S5_C"/>
    <property type="match status" value="1"/>
</dbReference>
<dbReference type="SUPFAM" id="SSF54768">
    <property type="entry name" value="dsRNA-binding domain-like"/>
    <property type="match status" value="1"/>
</dbReference>
<dbReference type="SUPFAM" id="SSF54211">
    <property type="entry name" value="Ribosomal protein S5 domain 2-like"/>
    <property type="match status" value="1"/>
</dbReference>
<dbReference type="PROSITE" id="PS00585">
    <property type="entry name" value="RIBOSOMAL_S5"/>
    <property type="match status" value="1"/>
</dbReference>
<dbReference type="PROSITE" id="PS50881">
    <property type="entry name" value="S5_DSRBD"/>
    <property type="match status" value="1"/>
</dbReference>
<name>RS5_FRATN</name>
<proteinExistence type="inferred from homology"/>
<feature type="chain" id="PRO_0000323127" description="Small ribosomal subunit protein uS5">
    <location>
        <begin position="1"/>
        <end position="166"/>
    </location>
</feature>
<feature type="domain" description="S5 DRBM" evidence="1">
    <location>
        <begin position="11"/>
        <end position="74"/>
    </location>
</feature>
<sequence length="166" mass="17559">MSNEVKKNEELIEKLVSVKRHSKTVKGGRIMSFAALTVVGDGKGRIGVGRGKSREVPAAIQKAMENAKKNMVSVNLNNDTLWYPVMSNHGASKVFMQPASAGTGIIAGGAMRSVFEAVGVHNVLAKTYGSTNPANVVRATIAGLAKIKSPDEIAEKRGLSVEEIQG</sequence>
<keyword id="KW-0687">Ribonucleoprotein</keyword>
<keyword id="KW-0689">Ribosomal protein</keyword>
<keyword id="KW-0694">RNA-binding</keyword>
<keyword id="KW-0699">rRNA-binding</keyword>
<reference key="1">
    <citation type="journal article" date="2007" name="Genome Biol.">
        <title>Comparison of Francisella tularensis genomes reveals evolutionary events associated with the emergence of human pathogenic strains.</title>
        <authorList>
            <person name="Rohmer L."/>
            <person name="Fong C."/>
            <person name="Abmayr S."/>
            <person name="Wasnick M."/>
            <person name="Larson Freeman T.J."/>
            <person name="Radey M."/>
            <person name="Guina T."/>
            <person name="Svensson K."/>
            <person name="Hayden H.S."/>
            <person name="Jacobs M."/>
            <person name="Gallagher L.A."/>
            <person name="Manoil C."/>
            <person name="Ernst R.K."/>
            <person name="Drees B."/>
            <person name="Buckley D."/>
            <person name="Haugen E."/>
            <person name="Bovee D."/>
            <person name="Zhou Y."/>
            <person name="Chang J."/>
            <person name="Levy R."/>
            <person name="Lim R."/>
            <person name="Gillett W."/>
            <person name="Guenthener D."/>
            <person name="Kang A."/>
            <person name="Shaffer S.A."/>
            <person name="Taylor G."/>
            <person name="Chen J."/>
            <person name="Gallis B."/>
            <person name="D'Argenio D.A."/>
            <person name="Forsman M."/>
            <person name="Olson M.V."/>
            <person name="Goodlett D.R."/>
            <person name="Kaul R."/>
            <person name="Miller S.I."/>
            <person name="Brittnacher M.J."/>
        </authorList>
    </citation>
    <scope>NUCLEOTIDE SEQUENCE [LARGE SCALE GENOMIC DNA]</scope>
    <source>
        <strain>U112</strain>
    </source>
</reference>